<organismHost>
    <name type="scientific">Solanum nigrum</name>
    <name type="common">Black nightshade</name>
    <dbReference type="NCBI Taxonomy" id="4112"/>
</organismHost>
<organismHost>
    <name type="scientific">Solanum tuberosum</name>
    <name type="common">Potato</name>
    <dbReference type="NCBI Taxonomy" id="4113"/>
</organismHost>
<accession>Q779L9</accession>
<sequence>MERRFIVYYNCSDCACGRYVSSLLTMSGAYVNVCVCIVFFILVYLSSCYNMRVLGFLRVCIYLYKLCR</sequence>
<evidence type="ECO:0000255" key="1"/>
<evidence type="ECO:0000269" key="2">
    <source>
    </source>
</evidence>
<evidence type="ECO:0000269" key="3">
    <source>
    </source>
</evidence>
<evidence type="ECO:0000305" key="4"/>
<keyword id="KW-1038">Host endoplasmic reticulum</keyword>
<keyword id="KW-1043">Host membrane</keyword>
<keyword id="KW-0472">Membrane</keyword>
<keyword id="KW-1185">Reference proteome</keyword>
<keyword id="KW-0812">Transmembrane</keyword>
<keyword id="KW-1133">Transmembrane helix</keyword>
<proteinExistence type="inferred from homology"/>
<dbReference type="EMBL" id="AJ277556">
    <property type="protein sequence ID" value="CAB91104.1"/>
    <property type="molecule type" value="Genomic_RNA"/>
</dbReference>
<dbReference type="RefSeq" id="NP_620441.1">
    <property type="nucleotide sequence ID" value="NC_003725.1"/>
</dbReference>
<dbReference type="SMR" id="Q779L9"/>
<dbReference type="GeneID" id="991173"/>
<dbReference type="KEGG" id="vg:991173"/>
<dbReference type="Proteomes" id="UP000006715">
    <property type="component" value="Genome"/>
</dbReference>
<dbReference type="GO" id="GO:0044167">
    <property type="term" value="C:host cell endoplasmic reticulum membrane"/>
    <property type="evidence" value="ECO:0007669"/>
    <property type="project" value="UniProtKB-SubCell"/>
</dbReference>
<dbReference type="GO" id="GO:0016020">
    <property type="term" value="C:membrane"/>
    <property type="evidence" value="ECO:0007669"/>
    <property type="project" value="UniProtKB-KW"/>
</dbReference>
<reference key="1">
    <citation type="submission" date="2000-05" db="EMBL/GenBank/DDBJ databases">
        <title>Complete sequence of RNA2 from Potato mop-top virus (PMTV-Sw).</title>
        <authorList>
            <person name="Savenkov E.I."/>
            <person name="Sandgren M."/>
            <person name="Germundsson A."/>
        </authorList>
    </citation>
    <scope>NUCLEOTIDE SEQUENCE [GENOMIC RNA]</scope>
</reference>
<reference key="2">
    <citation type="journal article" date="2005" name="J. Gen. Virol.">
        <title>Expression, localization and effects on virulence of the cysteine-rich 8 kDa protein of Potato mop-top virus.</title>
        <authorList>
            <person name="Lukhovitskaya N.I."/>
            <person name="Yelina N.E."/>
            <person name="Zamyatnin A.A. Jr."/>
            <person name="Schepetilnikov M.V."/>
            <person name="Solovyev A.G."/>
            <person name="Sandgren M."/>
            <person name="Morozov S.Y."/>
            <person name="Valkonen J.P."/>
            <person name="Savenkov E.I."/>
        </authorList>
    </citation>
    <scope>FUNCTION</scope>
    <scope>SUBCELLULAR LOCATION</scope>
</reference>
<reference key="3">
    <citation type="journal article" date="2019" name="Virology">
        <title>Efficient RNA silencing suppression activity of Potato Mop-Top Virus 8K protein is driven by variability and positive selection.</title>
        <authorList>
            <person name="Kalyandurg P.B."/>
            <person name="Tahmasebi A."/>
            <person name="Vetukuri R.R."/>
            <person name="Kushwaha S.K."/>
            <person name="Lezzhov A.A."/>
            <person name="Solovyev A.G."/>
            <person name="Grenville-Briggs L.J."/>
            <person name="Savenkov E.I."/>
        </authorList>
    </citation>
    <scope>FUNCTION</scope>
</reference>
<protein>
    <recommendedName>
        <fullName>Suppressor of RNA silencing</fullName>
    </recommendedName>
    <alternativeName>
        <fullName>8kD cysteine rich protein</fullName>
        <shortName>P8</shortName>
    </alternativeName>
</protein>
<feature type="chain" id="PRO_0000414119" description="Suppressor of RNA silencing">
    <location>
        <begin position="1"/>
        <end position="68"/>
    </location>
</feature>
<feature type="transmembrane region" description="Helical" evidence="1">
    <location>
        <begin position="23"/>
        <end position="43"/>
    </location>
</feature>
<name>VSR_PMTVS</name>
<comment type="function">
    <text evidence="2 3">Suppressor of RNA-mediated gene silencing, also known as post-transcriptional gene silencing (PTGS), a mechanism of plant viral defense that performs sequence-specific inhibition of viral mRNAs expression (PubMed:16186244, PubMed:31299487). The RNA silencing suppression activity is variable depending on the origin of the isolate (PubMed:31299487).</text>
</comment>
<comment type="subcellular location">
    <subcellularLocation>
        <location evidence="2">Host endoplasmic reticulum membrane</location>
        <topology evidence="2">Single-pass membrane protein</topology>
    </subcellularLocation>
    <text evidence="2">Localizes to host ER-derived membranes.</text>
</comment>
<comment type="similarity">
    <text evidence="4">Belongs to the virgaviridae suppressor of RNA silencing family.</text>
</comment>
<gene>
    <name type="primary">8K protein</name>
</gene>
<organism>
    <name type="scientific">Potato mop-top virus (isolate Potato/Sweden/Sw)</name>
    <name type="common">PMTV</name>
    <dbReference type="NCBI Taxonomy" id="652839"/>
    <lineage>
        <taxon>Viruses</taxon>
        <taxon>Riboviria</taxon>
        <taxon>Orthornavirae</taxon>
        <taxon>Kitrinoviricota</taxon>
        <taxon>Alsuviricetes</taxon>
        <taxon>Martellivirales</taxon>
        <taxon>Virgaviridae</taxon>
        <taxon>Pomovirus</taxon>
        <taxon>Potato mop-top virus</taxon>
    </lineage>
</organism>